<accession>P33721</accession>
<protein>
    <recommendedName>
        <fullName>Bombyxin B-1 homolog</fullName>
    </recommendedName>
    <component>
        <recommendedName>
            <fullName>Bombyxin B-1 homolog B chain</fullName>
        </recommendedName>
    </component>
    <component>
        <recommendedName>
            <fullName>Bombyxin B-1 homolog A chain</fullName>
        </recommendedName>
    </component>
</protein>
<dbReference type="EMBL" id="D13923">
    <property type="protein sequence ID" value="BAA03020.1"/>
    <property type="molecule type" value="Genomic_DNA"/>
</dbReference>
<dbReference type="PIR" id="JQ0903">
    <property type="entry name" value="JQ0903"/>
</dbReference>
<dbReference type="GO" id="GO:0005615">
    <property type="term" value="C:extracellular space"/>
    <property type="evidence" value="ECO:0007669"/>
    <property type="project" value="InterPro"/>
</dbReference>
<dbReference type="GO" id="GO:0008083">
    <property type="term" value="F:growth factor activity"/>
    <property type="evidence" value="ECO:0007669"/>
    <property type="project" value="InterPro"/>
</dbReference>
<dbReference type="GO" id="GO:0005179">
    <property type="term" value="F:hormone activity"/>
    <property type="evidence" value="ECO:0007669"/>
    <property type="project" value="UniProtKB-KW"/>
</dbReference>
<dbReference type="CDD" id="cd04366">
    <property type="entry name" value="IlGF_insulin_bombyxin_like"/>
    <property type="match status" value="1"/>
</dbReference>
<dbReference type="Gene3D" id="1.10.100.10">
    <property type="entry name" value="Insulin-like"/>
    <property type="match status" value="1"/>
</dbReference>
<dbReference type="InterPro" id="IPR017097">
    <property type="entry name" value="Bombyxin"/>
</dbReference>
<dbReference type="InterPro" id="IPR027285">
    <property type="entry name" value="Bombyxin_B"/>
</dbReference>
<dbReference type="InterPro" id="IPR016179">
    <property type="entry name" value="Insulin-like"/>
</dbReference>
<dbReference type="InterPro" id="IPR036438">
    <property type="entry name" value="Insulin-like_sf"/>
</dbReference>
<dbReference type="InterPro" id="IPR022353">
    <property type="entry name" value="Insulin_CS"/>
</dbReference>
<dbReference type="InterPro" id="IPR022352">
    <property type="entry name" value="Insulin_family"/>
</dbReference>
<dbReference type="PANTHER" id="PTHR13647:SF4">
    <property type="entry name" value="INSULIN-LIKE PEPTIDE 1-RELATED"/>
    <property type="match status" value="1"/>
</dbReference>
<dbReference type="PANTHER" id="PTHR13647">
    <property type="entry name" value="INSULIN-LIKE PEPTIDE 2-RELATED"/>
    <property type="match status" value="1"/>
</dbReference>
<dbReference type="Pfam" id="PF00049">
    <property type="entry name" value="Insulin"/>
    <property type="match status" value="1"/>
</dbReference>
<dbReference type="PIRSF" id="PIRSF037038">
    <property type="entry name" value="Bombyxin"/>
    <property type="match status" value="1"/>
</dbReference>
<dbReference type="PIRSF" id="PIRSF500313">
    <property type="entry name" value="Bombyxin_B"/>
    <property type="match status" value="1"/>
</dbReference>
<dbReference type="PRINTS" id="PR02003">
    <property type="entry name" value="BOMBYXIN"/>
</dbReference>
<dbReference type="PRINTS" id="PR00276">
    <property type="entry name" value="INSULINFAMLY"/>
</dbReference>
<dbReference type="SMART" id="SM00078">
    <property type="entry name" value="IlGF"/>
    <property type="match status" value="1"/>
</dbReference>
<dbReference type="SUPFAM" id="SSF56994">
    <property type="entry name" value="Insulin-like"/>
    <property type="match status" value="1"/>
</dbReference>
<dbReference type="PROSITE" id="PS00262">
    <property type="entry name" value="INSULIN"/>
    <property type="match status" value="1"/>
</dbReference>
<organism>
    <name type="scientific">Samia cynthia</name>
    <name type="common">Ailanthus silkmoth</name>
    <name type="synonym">Phalaena cynthia</name>
    <dbReference type="NCBI Taxonomy" id="7127"/>
    <lineage>
        <taxon>Eukaryota</taxon>
        <taxon>Metazoa</taxon>
        <taxon>Ecdysozoa</taxon>
        <taxon>Arthropoda</taxon>
        <taxon>Hexapoda</taxon>
        <taxon>Insecta</taxon>
        <taxon>Pterygota</taxon>
        <taxon>Neoptera</taxon>
        <taxon>Endopterygota</taxon>
        <taxon>Lepidoptera</taxon>
        <taxon>Glossata</taxon>
        <taxon>Ditrysia</taxon>
        <taxon>Bombycoidea</taxon>
        <taxon>Saturniidae</taxon>
        <taxon>Saturniinae</taxon>
        <taxon>Attacini</taxon>
        <taxon>Samia</taxon>
    </lineage>
</organism>
<feature type="signal peptide" evidence="1">
    <location>
        <begin position="1"/>
        <end position="19"/>
    </location>
</feature>
<feature type="peptide" id="PRO_0000016052" description="Bombyxin B-1 homolog B chain">
    <location>
        <begin position="20"/>
        <end position="46"/>
    </location>
</feature>
<feature type="propeptide" id="PRO_0000016053" description="C peptide like">
    <location>
        <begin position="49"/>
        <end position="69"/>
    </location>
</feature>
<feature type="peptide" id="PRO_0000016054" description="Bombyxin B-1 homolog A chain">
    <location>
        <begin position="72"/>
        <end position="91"/>
    </location>
</feature>
<feature type="disulfide bond" description="Interchain (between B and A chains)" evidence="1">
    <location>
        <begin position="27"/>
        <end position="78"/>
    </location>
</feature>
<feature type="disulfide bond" description="Interchain (between B and A chains)" evidence="1">
    <location>
        <begin position="39"/>
        <end position="91"/>
    </location>
</feature>
<feature type="disulfide bond" evidence="1">
    <location>
        <begin position="77"/>
        <end position="82"/>
    </location>
</feature>
<comment type="function">
    <text>Brain peptide responsible for activation of prothoracic glands to produce ecdysone in insects.</text>
</comment>
<comment type="subunit">
    <text>Heterodimer of a B chain and an A chain linked by two disulfide bonds.</text>
</comment>
<comment type="subcellular location">
    <subcellularLocation>
        <location>Secreted</location>
    </subcellularLocation>
</comment>
<comment type="similarity">
    <text evidence="2">Belongs to the insulin family.</text>
</comment>
<reference key="1">
    <citation type="journal article" date="1992" name="Gen. Comp. Endocrinol.">
        <title>Structure and expression of bombyxin-related peptide genes of the moth Samia cynthia ricini.</title>
        <authorList>
            <person name="Kimura-Kawakami M."/>
            <person name="Iwami M."/>
            <person name="Kawakami A."/>
            <person name="Nagasawa H."/>
            <person name="Suzuki A."/>
            <person name="Ishizaki H."/>
        </authorList>
    </citation>
    <scope>NUCLEOTIDE SEQUENCE [GENOMIC DNA]</scope>
</reference>
<gene>
    <name type="primary">SBXB1</name>
</gene>
<proteinExistence type="inferred from homology"/>
<keyword id="KW-0165">Cleavage on pair of basic residues</keyword>
<keyword id="KW-1015">Disulfide bond</keyword>
<keyword id="KW-0372">Hormone</keyword>
<keyword id="KW-0964">Secreted</keyword>
<keyword id="KW-0732">Signal</keyword>
<sequence length="91" mass="10073">MKVSMFVVIVLCMVAASSAGRGARRYCGRVLADTLAYLCPEMEEVEKRSGAQYARYGWQSPESREGARGKRGVVDECCYNSCTLDVLLSYC</sequence>
<evidence type="ECO:0000250" key="1"/>
<evidence type="ECO:0000305" key="2"/>
<name>BXB1_SAMCY</name>